<feature type="chain" id="PRO_0000104006" description="Uncharacterized protein Rv2286c">
    <location>
        <begin position="1"/>
        <end position="230"/>
    </location>
</feature>
<gene>
    <name type="ordered locus">Rv2286c</name>
    <name type="ORF">MTCY339.24</name>
</gene>
<name>Y2286_MYCTU</name>
<dbReference type="EMBL" id="AL123456">
    <property type="protein sequence ID" value="CCP45068.1"/>
    <property type="molecule type" value="Genomic_DNA"/>
</dbReference>
<dbReference type="PIR" id="B70732">
    <property type="entry name" value="B70732"/>
</dbReference>
<dbReference type="RefSeq" id="NP_216802.1">
    <property type="nucleotide sequence ID" value="NC_000962.3"/>
</dbReference>
<dbReference type="RefSeq" id="WP_003411707.1">
    <property type="nucleotide sequence ID" value="NZ_NVQJ01000012.1"/>
</dbReference>
<dbReference type="SMR" id="P9WLE7"/>
<dbReference type="STRING" id="83332.Rv2286c"/>
<dbReference type="PaxDb" id="83332-Rv2286c"/>
<dbReference type="DNASU" id="887395"/>
<dbReference type="GeneID" id="887395"/>
<dbReference type="KEGG" id="mtu:Rv2286c"/>
<dbReference type="KEGG" id="mtv:RVBD_2286c"/>
<dbReference type="TubercuList" id="Rv2286c"/>
<dbReference type="eggNOG" id="COG2761">
    <property type="taxonomic scope" value="Bacteria"/>
</dbReference>
<dbReference type="InParanoid" id="P9WLE7"/>
<dbReference type="OrthoDB" id="4125991at2"/>
<dbReference type="PhylomeDB" id="P9WLE7"/>
<dbReference type="Proteomes" id="UP000001584">
    <property type="component" value="Chromosome"/>
</dbReference>
<dbReference type="Gene3D" id="3.40.30.10">
    <property type="entry name" value="Glutaredoxin"/>
    <property type="match status" value="1"/>
</dbReference>
<dbReference type="InterPro" id="IPR053977">
    <property type="entry name" value="Rv2466c-like"/>
</dbReference>
<dbReference type="InterPro" id="IPR036249">
    <property type="entry name" value="Thioredoxin-like_sf"/>
</dbReference>
<dbReference type="Pfam" id="PF22234">
    <property type="entry name" value="Rv2466c-like"/>
    <property type="match status" value="1"/>
</dbReference>
<dbReference type="SUPFAM" id="SSF52833">
    <property type="entry name" value="Thioredoxin-like"/>
    <property type="match status" value="1"/>
</dbReference>
<sequence>MTTVDFHFDPLCPFAYQTSVWIRDVRAQLGITINWRFFSLEEINLVAGKKHPWERDWSYGWSLMRIGALLRRTNMSLLDRWYAAIGHELHTLGGKPHDPAVARRLLCDVGVNAAILDAALDDPTTHDDVRADHQRVVAAGGYGVPTLFLDGQCLFGPVLVDPPAGPAALNLWSVVTGMAGLPHVYELQRPKSPADVELIAQQLRPYLDGRDWVSINRGEIVDIDRLAGRS</sequence>
<proteinExistence type="evidence at protein level"/>
<reference key="1">
    <citation type="journal article" date="1998" name="Nature">
        <title>Deciphering the biology of Mycobacterium tuberculosis from the complete genome sequence.</title>
        <authorList>
            <person name="Cole S.T."/>
            <person name="Brosch R."/>
            <person name="Parkhill J."/>
            <person name="Garnier T."/>
            <person name="Churcher C.M."/>
            <person name="Harris D.E."/>
            <person name="Gordon S.V."/>
            <person name="Eiglmeier K."/>
            <person name="Gas S."/>
            <person name="Barry C.E. III"/>
            <person name="Tekaia F."/>
            <person name="Badcock K."/>
            <person name="Basham D."/>
            <person name="Brown D."/>
            <person name="Chillingworth T."/>
            <person name="Connor R."/>
            <person name="Davies R.M."/>
            <person name="Devlin K."/>
            <person name="Feltwell T."/>
            <person name="Gentles S."/>
            <person name="Hamlin N."/>
            <person name="Holroyd S."/>
            <person name="Hornsby T."/>
            <person name="Jagels K."/>
            <person name="Krogh A."/>
            <person name="McLean J."/>
            <person name="Moule S."/>
            <person name="Murphy L.D."/>
            <person name="Oliver S."/>
            <person name="Osborne J."/>
            <person name="Quail M.A."/>
            <person name="Rajandream M.A."/>
            <person name="Rogers J."/>
            <person name="Rutter S."/>
            <person name="Seeger K."/>
            <person name="Skelton S."/>
            <person name="Squares S."/>
            <person name="Squares R."/>
            <person name="Sulston J.E."/>
            <person name="Taylor K."/>
            <person name="Whitehead S."/>
            <person name="Barrell B.G."/>
        </authorList>
    </citation>
    <scope>NUCLEOTIDE SEQUENCE [LARGE SCALE GENOMIC DNA]</scope>
    <source>
        <strain>ATCC 25618 / H37Rv</strain>
    </source>
</reference>
<reference key="2">
    <citation type="journal article" date="2011" name="Mol. Cell. Proteomics">
        <title>Proteogenomic analysis of Mycobacterium tuberculosis by high resolution mass spectrometry.</title>
        <authorList>
            <person name="Kelkar D.S."/>
            <person name="Kumar D."/>
            <person name="Kumar P."/>
            <person name="Balakrishnan L."/>
            <person name="Muthusamy B."/>
            <person name="Yadav A.K."/>
            <person name="Shrivastava P."/>
            <person name="Marimuthu A."/>
            <person name="Anand S."/>
            <person name="Sundaram H."/>
            <person name="Kingsbury R."/>
            <person name="Harsha H.C."/>
            <person name="Nair B."/>
            <person name="Prasad T.S."/>
            <person name="Chauhan D.S."/>
            <person name="Katoch K."/>
            <person name="Katoch V.M."/>
            <person name="Kumar P."/>
            <person name="Chaerkady R."/>
            <person name="Ramachandran S."/>
            <person name="Dash D."/>
            <person name="Pandey A."/>
        </authorList>
    </citation>
    <scope>IDENTIFICATION BY MASS SPECTROMETRY [LARGE SCALE ANALYSIS]</scope>
    <source>
        <strain>ATCC 25618 / H37Rv</strain>
    </source>
</reference>
<protein>
    <recommendedName>
        <fullName>Uncharacterized protein Rv2286c</fullName>
    </recommendedName>
</protein>
<accession>P9WLE7</accession>
<accession>L0TAR4</accession>
<accession>Q50679</accession>
<organism>
    <name type="scientific">Mycobacterium tuberculosis (strain ATCC 25618 / H37Rv)</name>
    <dbReference type="NCBI Taxonomy" id="83332"/>
    <lineage>
        <taxon>Bacteria</taxon>
        <taxon>Bacillati</taxon>
        <taxon>Actinomycetota</taxon>
        <taxon>Actinomycetes</taxon>
        <taxon>Mycobacteriales</taxon>
        <taxon>Mycobacteriaceae</taxon>
        <taxon>Mycobacterium</taxon>
        <taxon>Mycobacterium tuberculosis complex</taxon>
    </lineage>
</organism>
<keyword id="KW-1185">Reference proteome</keyword>